<comment type="function">
    <text evidence="1">Poorly processive, error-prone DNA polymerase involved in untargeted mutagenesis. Copies undamaged DNA at stalled replication forks, which arise in vivo from mismatched or misaligned primer ends. These misaligned primers can be extended by PolIV. Exhibits no 3'-5' exonuclease (proofreading) activity. May be involved in translesional synthesis, in conjunction with the beta clamp from PolIII.</text>
</comment>
<comment type="catalytic activity">
    <reaction evidence="1">
        <text>DNA(n) + a 2'-deoxyribonucleoside 5'-triphosphate = DNA(n+1) + diphosphate</text>
        <dbReference type="Rhea" id="RHEA:22508"/>
        <dbReference type="Rhea" id="RHEA-COMP:17339"/>
        <dbReference type="Rhea" id="RHEA-COMP:17340"/>
        <dbReference type="ChEBI" id="CHEBI:33019"/>
        <dbReference type="ChEBI" id="CHEBI:61560"/>
        <dbReference type="ChEBI" id="CHEBI:173112"/>
        <dbReference type="EC" id="2.7.7.7"/>
    </reaction>
</comment>
<comment type="cofactor">
    <cofactor evidence="1">
        <name>Mg(2+)</name>
        <dbReference type="ChEBI" id="CHEBI:18420"/>
    </cofactor>
    <text evidence="1">Binds 2 magnesium ions per subunit.</text>
</comment>
<comment type="subunit">
    <text evidence="1">Monomer.</text>
</comment>
<comment type="subcellular location">
    <subcellularLocation>
        <location evidence="1">Cytoplasm</location>
    </subcellularLocation>
</comment>
<comment type="similarity">
    <text evidence="1">Belongs to the DNA polymerase type-Y family.</text>
</comment>
<accession>Q9KPS5</accession>
<name>DPO4_VIBCH</name>
<protein>
    <recommendedName>
        <fullName evidence="1">DNA polymerase IV</fullName>
        <shortName evidence="1">Pol IV</shortName>
        <ecNumber evidence="1">2.7.7.7</ecNumber>
    </recommendedName>
</protein>
<proteinExistence type="inferred from homology"/>
<sequence length="360" mass="40891">MQDRIRKIIHVDMDCFFAAVEMRDNPAYREIALAVGGHEKQRGVISTCNYQARKFGVRSAMPTAQALKLCPQLHVVPGRMSVYKSVSQQIQTIFQRYTSLIEPLSLDEAYLDVSESTAYQGSATLIAQAIRRDIWQELNLTASAGVAPIKFLAKVASDLNKPDGLYVVTPDKVQEMVDSLPLEKIPGVGKVALEKLHQAGLYVGADVRRADYRKLLHQFGRLGASLWKKSHGIDEREVVTERERKSVGVEYTFSQNISTFQECWQVIEQKLYPELDARLSRAHPQRGIIKQGIKVKFADFQQTTIEHVHPALELDYFHELLEQVLTRQQGREIRLLGLSVMLKPELQMKQLSMFPSDGWQ</sequence>
<evidence type="ECO:0000255" key="1">
    <source>
        <dbReference type="HAMAP-Rule" id="MF_01113"/>
    </source>
</evidence>
<dbReference type="EC" id="2.7.7.7" evidence="1"/>
<dbReference type="EMBL" id="AE003852">
    <property type="protein sequence ID" value="AAF95431.1"/>
    <property type="molecule type" value="Genomic_DNA"/>
</dbReference>
<dbReference type="PIR" id="G82093">
    <property type="entry name" value="G82093"/>
</dbReference>
<dbReference type="RefSeq" id="NP_231918.1">
    <property type="nucleotide sequence ID" value="NC_002505.1"/>
</dbReference>
<dbReference type="RefSeq" id="WP_001153985.1">
    <property type="nucleotide sequence ID" value="NZ_LT906614.1"/>
</dbReference>
<dbReference type="SMR" id="Q9KPS5"/>
<dbReference type="STRING" id="243277.VC_2287"/>
<dbReference type="DNASU" id="2613209"/>
<dbReference type="EnsemblBacteria" id="AAF95431">
    <property type="protein sequence ID" value="AAF95431"/>
    <property type="gene ID" value="VC_2287"/>
</dbReference>
<dbReference type="KEGG" id="vch:VC_2287"/>
<dbReference type="PATRIC" id="fig|243277.26.peg.2181"/>
<dbReference type="eggNOG" id="COG0389">
    <property type="taxonomic scope" value="Bacteria"/>
</dbReference>
<dbReference type="HOGENOM" id="CLU_012348_1_2_6"/>
<dbReference type="Proteomes" id="UP000000584">
    <property type="component" value="Chromosome 1"/>
</dbReference>
<dbReference type="GO" id="GO:0005737">
    <property type="term" value="C:cytoplasm"/>
    <property type="evidence" value="ECO:0007669"/>
    <property type="project" value="UniProtKB-SubCell"/>
</dbReference>
<dbReference type="GO" id="GO:0003684">
    <property type="term" value="F:damaged DNA binding"/>
    <property type="evidence" value="ECO:0007669"/>
    <property type="project" value="InterPro"/>
</dbReference>
<dbReference type="GO" id="GO:0003887">
    <property type="term" value="F:DNA-directed DNA polymerase activity"/>
    <property type="evidence" value="ECO:0000318"/>
    <property type="project" value="GO_Central"/>
</dbReference>
<dbReference type="GO" id="GO:0000287">
    <property type="term" value="F:magnesium ion binding"/>
    <property type="evidence" value="ECO:0007669"/>
    <property type="project" value="UniProtKB-UniRule"/>
</dbReference>
<dbReference type="GO" id="GO:0006261">
    <property type="term" value="P:DNA-templated DNA replication"/>
    <property type="evidence" value="ECO:0007669"/>
    <property type="project" value="UniProtKB-UniRule"/>
</dbReference>
<dbReference type="GO" id="GO:0042276">
    <property type="term" value="P:error-prone translesion synthesis"/>
    <property type="evidence" value="ECO:0000318"/>
    <property type="project" value="GO_Central"/>
</dbReference>
<dbReference type="GO" id="GO:0009432">
    <property type="term" value="P:SOS response"/>
    <property type="evidence" value="ECO:0000318"/>
    <property type="project" value="GO_Central"/>
</dbReference>
<dbReference type="CDD" id="cd03586">
    <property type="entry name" value="PolY_Pol_IV_kappa"/>
    <property type="match status" value="1"/>
</dbReference>
<dbReference type="FunFam" id="3.30.1490.100:FF:000002">
    <property type="entry name" value="DNA polymerase IV"/>
    <property type="match status" value="1"/>
</dbReference>
<dbReference type="FunFam" id="3.30.70.270:FF:000002">
    <property type="entry name" value="DNA polymerase IV"/>
    <property type="match status" value="1"/>
</dbReference>
<dbReference type="FunFam" id="3.40.1170.60:FF:000001">
    <property type="entry name" value="DNA polymerase IV"/>
    <property type="match status" value="1"/>
</dbReference>
<dbReference type="Gene3D" id="3.30.70.270">
    <property type="match status" value="1"/>
</dbReference>
<dbReference type="Gene3D" id="3.40.1170.60">
    <property type="match status" value="1"/>
</dbReference>
<dbReference type="Gene3D" id="1.10.150.20">
    <property type="entry name" value="5' to 3' exonuclease, C-terminal subdomain"/>
    <property type="match status" value="1"/>
</dbReference>
<dbReference type="Gene3D" id="3.30.1490.100">
    <property type="entry name" value="DNA polymerase, Y-family, little finger domain"/>
    <property type="match status" value="1"/>
</dbReference>
<dbReference type="HAMAP" id="MF_01113">
    <property type="entry name" value="DNApol_IV"/>
    <property type="match status" value="1"/>
</dbReference>
<dbReference type="InterPro" id="IPR043502">
    <property type="entry name" value="DNA/RNA_pol_sf"/>
</dbReference>
<dbReference type="InterPro" id="IPR036775">
    <property type="entry name" value="DNA_pol_Y-fam_lit_finger_sf"/>
</dbReference>
<dbReference type="InterPro" id="IPR017961">
    <property type="entry name" value="DNA_pol_Y-fam_little_finger"/>
</dbReference>
<dbReference type="InterPro" id="IPR050116">
    <property type="entry name" value="DNA_polymerase-Y"/>
</dbReference>
<dbReference type="InterPro" id="IPR022880">
    <property type="entry name" value="DNApol_IV"/>
</dbReference>
<dbReference type="InterPro" id="IPR024728">
    <property type="entry name" value="PolY_HhH_motif"/>
</dbReference>
<dbReference type="InterPro" id="IPR043128">
    <property type="entry name" value="Rev_trsase/Diguanyl_cyclase"/>
</dbReference>
<dbReference type="InterPro" id="IPR001126">
    <property type="entry name" value="UmuC"/>
</dbReference>
<dbReference type="NCBIfam" id="NF002677">
    <property type="entry name" value="PRK02406.1"/>
    <property type="match status" value="1"/>
</dbReference>
<dbReference type="PANTHER" id="PTHR11076:SF33">
    <property type="entry name" value="DNA POLYMERASE KAPPA"/>
    <property type="match status" value="1"/>
</dbReference>
<dbReference type="PANTHER" id="PTHR11076">
    <property type="entry name" value="DNA REPAIR POLYMERASE UMUC / TRANSFERASE FAMILY MEMBER"/>
    <property type="match status" value="1"/>
</dbReference>
<dbReference type="Pfam" id="PF00817">
    <property type="entry name" value="IMS"/>
    <property type="match status" value="1"/>
</dbReference>
<dbReference type="Pfam" id="PF11799">
    <property type="entry name" value="IMS_C"/>
    <property type="match status" value="1"/>
</dbReference>
<dbReference type="Pfam" id="PF11798">
    <property type="entry name" value="IMS_HHH"/>
    <property type="match status" value="1"/>
</dbReference>
<dbReference type="SUPFAM" id="SSF56672">
    <property type="entry name" value="DNA/RNA polymerases"/>
    <property type="match status" value="1"/>
</dbReference>
<dbReference type="SUPFAM" id="SSF100879">
    <property type="entry name" value="Lesion bypass DNA polymerase (Y-family), little finger domain"/>
    <property type="match status" value="1"/>
</dbReference>
<dbReference type="PROSITE" id="PS50173">
    <property type="entry name" value="UMUC"/>
    <property type="match status" value="1"/>
</dbReference>
<gene>
    <name evidence="1" type="primary">dinB</name>
    <name type="ordered locus">VC_2287</name>
</gene>
<feature type="chain" id="PRO_0000173962" description="DNA polymerase IV">
    <location>
        <begin position="1"/>
        <end position="360"/>
    </location>
</feature>
<feature type="domain" description="UmuC" evidence="1">
    <location>
        <begin position="8"/>
        <end position="189"/>
    </location>
</feature>
<feature type="active site" evidence="1">
    <location>
        <position position="108"/>
    </location>
</feature>
<feature type="binding site" evidence="1">
    <location>
        <position position="12"/>
    </location>
    <ligand>
        <name>Mg(2+)</name>
        <dbReference type="ChEBI" id="CHEBI:18420"/>
    </ligand>
</feature>
<feature type="binding site" evidence="1">
    <location>
        <position position="107"/>
    </location>
    <ligand>
        <name>Mg(2+)</name>
        <dbReference type="ChEBI" id="CHEBI:18420"/>
    </ligand>
</feature>
<feature type="site" description="Substrate discrimination" evidence="1">
    <location>
        <position position="17"/>
    </location>
</feature>
<reference key="1">
    <citation type="journal article" date="2000" name="Nature">
        <title>DNA sequence of both chromosomes of the cholera pathogen Vibrio cholerae.</title>
        <authorList>
            <person name="Heidelberg J.F."/>
            <person name="Eisen J.A."/>
            <person name="Nelson W.C."/>
            <person name="Clayton R.A."/>
            <person name="Gwinn M.L."/>
            <person name="Dodson R.J."/>
            <person name="Haft D.H."/>
            <person name="Hickey E.K."/>
            <person name="Peterson J.D."/>
            <person name="Umayam L.A."/>
            <person name="Gill S.R."/>
            <person name="Nelson K.E."/>
            <person name="Read T.D."/>
            <person name="Tettelin H."/>
            <person name="Richardson D.L."/>
            <person name="Ermolaeva M.D."/>
            <person name="Vamathevan J.J."/>
            <person name="Bass S."/>
            <person name="Qin H."/>
            <person name="Dragoi I."/>
            <person name="Sellers P."/>
            <person name="McDonald L.A."/>
            <person name="Utterback T.R."/>
            <person name="Fleischmann R.D."/>
            <person name="Nierman W.C."/>
            <person name="White O."/>
            <person name="Salzberg S.L."/>
            <person name="Smith H.O."/>
            <person name="Colwell R.R."/>
            <person name="Mekalanos J.J."/>
            <person name="Venter J.C."/>
            <person name="Fraser C.M."/>
        </authorList>
    </citation>
    <scope>NUCLEOTIDE SEQUENCE [LARGE SCALE GENOMIC DNA]</scope>
    <source>
        <strain>ATCC 39315 / El Tor Inaba N16961</strain>
    </source>
</reference>
<keyword id="KW-0963">Cytoplasm</keyword>
<keyword id="KW-0227">DNA damage</keyword>
<keyword id="KW-0234">DNA repair</keyword>
<keyword id="KW-0235">DNA replication</keyword>
<keyword id="KW-0238">DNA-binding</keyword>
<keyword id="KW-0239">DNA-directed DNA polymerase</keyword>
<keyword id="KW-0460">Magnesium</keyword>
<keyword id="KW-0479">Metal-binding</keyword>
<keyword id="KW-0515">Mutator protein</keyword>
<keyword id="KW-0548">Nucleotidyltransferase</keyword>
<keyword id="KW-1185">Reference proteome</keyword>
<keyword id="KW-0808">Transferase</keyword>
<organism>
    <name type="scientific">Vibrio cholerae serotype O1 (strain ATCC 39315 / El Tor Inaba N16961)</name>
    <dbReference type="NCBI Taxonomy" id="243277"/>
    <lineage>
        <taxon>Bacteria</taxon>
        <taxon>Pseudomonadati</taxon>
        <taxon>Pseudomonadota</taxon>
        <taxon>Gammaproteobacteria</taxon>
        <taxon>Vibrionales</taxon>
        <taxon>Vibrionaceae</taxon>
        <taxon>Vibrio</taxon>
    </lineage>
</organism>